<feature type="chain" id="PRO_1000093947" description="4-hydroxy-tetrahydrodipicolinate reductase">
    <location>
        <begin position="1"/>
        <end position="265"/>
    </location>
</feature>
<feature type="active site" description="Proton donor/acceptor" evidence="1">
    <location>
        <position position="153"/>
    </location>
</feature>
<feature type="active site" description="Proton donor" evidence="1">
    <location>
        <position position="157"/>
    </location>
</feature>
<feature type="binding site" evidence="1">
    <location>
        <begin position="7"/>
        <end position="12"/>
    </location>
    <ligand>
        <name>NAD(+)</name>
        <dbReference type="ChEBI" id="CHEBI:57540"/>
    </ligand>
</feature>
<feature type="binding site" evidence="1">
    <location>
        <position position="33"/>
    </location>
    <ligand>
        <name>NAD(+)</name>
        <dbReference type="ChEBI" id="CHEBI:57540"/>
    </ligand>
</feature>
<feature type="binding site" evidence="1">
    <location>
        <position position="34"/>
    </location>
    <ligand>
        <name>NADP(+)</name>
        <dbReference type="ChEBI" id="CHEBI:58349"/>
    </ligand>
</feature>
<feature type="binding site" evidence="1">
    <location>
        <begin position="96"/>
        <end position="98"/>
    </location>
    <ligand>
        <name>NAD(+)</name>
        <dbReference type="ChEBI" id="CHEBI:57540"/>
    </ligand>
</feature>
<feature type="binding site" evidence="1">
    <location>
        <begin position="120"/>
        <end position="123"/>
    </location>
    <ligand>
        <name>NAD(+)</name>
        <dbReference type="ChEBI" id="CHEBI:57540"/>
    </ligand>
</feature>
<feature type="binding site" evidence="1">
    <location>
        <position position="154"/>
    </location>
    <ligand>
        <name>(S)-2,3,4,5-tetrahydrodipicolinate</name>
        <dbReference type="ChEBI" id="CHEBI:16845"/>
    </ligand>
</feature>
<feature type="binding site" evidence="1">
    <location>
        <begin position="163"/>
        <end position="164"/>
    </location>
    <ligand>
        <name>(S)-2,3,4,5-tetrahydrodipicolinate</name>
        <dbReference type="ChEBI" id="CHEBI:16845"/>
    </ligand>
</feature>
<name>DAPB_BURO0</name>
<protein>
    <recommendedName>
        <fullName evidence="1">4-hydroxy-tetrahydrodipicolinate reductase</fullName>
        <shortName evidence="1">HTPA reductase</shortName>
        <ecNumber evidence="1">1.17.1.8</ecNumber>
    </recommendedName>
</protein>
<keyword id="KW-0028">Amino-acid biosynthesis</keyword>
<keyword id="KW-0963">Cytoplasm</keyword>
<keyword id="KW-0220">Diaminopimelate biosynthesis</keyword>
<keyword id="KW-0457">Lysine biosynthesis</keyword>
<keyword id="KW-0520">NAD</keyword>
<keyword id="KW-0521">NADP</keyword>
<keyword id="KW-0560">Oxidoreductase</keyword>
<comment type="function">
    <text evidence="1">Catalyzes the conversion of 4-hydroxy-tetrahydrodipicolinate (HTPA) to tetrahydrodipicolinate.</text>
</comment>
<comment type="catalytic activity">
    <reaction evidence="1">
        <text>(S)-2,3,4,5-tetrahydrodipicolinate + NAD(+) + H2O = (2S,4S)-4-hydroxy-2,3,4,5-tetrahydrodipicolinate + NADH + H(+)</text>
        <dbReference type="Rhea" id="RHEA:35323"/>
        <dbReference type="ChEBI" id="CHEBI:15377"/>
        <dbReference type="ChEBI" id="CHEBI:15378"/>
        <dbReference type="ChEBI" id="CHEBI:16845"/>
        <dbReference type="ChEBI" id="CHEBI:57540"/>
        <dbReference type="ChEBI" id="CHEBI:57945"/>
        <dbReference type="ChEBI" id="CHEBI:67139"/>
        <dbReference type="EC" id="1.17.1.8"/>
    </reaction>
</comment>
<comment type="catalytic activity">
    <reaction evidence="1">
        <text>(S)-2,3,4,5-tetrahydrodipicolinate + NADP(+) + H2O = (2S,4S)-4-hydroxy-2,3,4,5-tetrahydrodipicolinate + NADPH + H(+)</text>
        <dbReference type="Rhea" id="RHEA:35331"/>
        <dbReference type="ChEBI" id="CHEBI:15377"/>
        <dbReference type="ChEBI" id="CHEBI:15378"/>
        <dbReference type="ChEBI" id="CHEBI:16845"/>
        <dbReference type="ChEBI" id="CHEBI:57783"/>
        <dbReference type="ChEBI" id="CHEBI:58349"/>
        <dbReference type="ChEBI" id="CHEBI:67139"/>
        <dbReference type="EC" id="1.17.1.8"/>
    </reaction>
</comment>
<comment type="pathway">
    <text evidence="1">Amino-acid biosynthesis; L-lysine biosynthesis via DAP pathway; (S)-tetrahydrodipicolinate from L-aspartate: step 4/4.</text>
</comment>
<comment type="subcellular location">
    <subcellularLocation>
        <location evidence="1">Cytoplasm</location>
    </subcellularLocation>
</comment>
<comment type="similarity">
    <text evidence="1">Belongs to the DapB family.</text>
</comment>
<comment type="caution">
    <text evidence="2">Was originally thought to be a dihydrodipicolinate reductase (DHDPR), catalyzing the conversion of dihydrodipicolinate to tetrahydrodipicolinate. However, it was shown in E.coli that the substrate of the enzymatic reaction is not dihydrodipicolinate (DHDP) but in fact (2S,4S)-4-hydroxy-2,3,4,5-tetrahydrodipicolinic acid (HTPA), the product released by the DapA-catalyzed reaction.</text>
</comment>
<reference key="1">
    <citation type="submission" date="2008-02" db="EMBL/GenBank/DDBJ databases">
        <title>Complete sequence of chromosome 1 of Burkholderia cenocepacia MC0-3.</title>
        <authorList>
            <person name="Copeland A."/>
            <person name="Lucas S."/>
            <person name="Lapidus A."/>
            <person name="Barry K."/>
            <person name="Bruce D."/>
            <person name="Goodwin L."/>
            <person name="Glavina del Rio T."/>
            <person name="Dalin E."/>
            <person name="Tice H."/>
            <person name="Pitluck S."/>
            <person name="Chain P."/>
            <person name="Malfatti S."/>
            <person name="Shin M."/>
            <person name="Vergez L."/>
            <person name="Schmutz J."/>
            <person name="Larimer F."/>
            <person name="Land M."/>
            <person name="Hauser L."/>
            <person name="Kyrpides N."/>
            <person name="Mikhailova N."/>
            <person name="Tiedje J."/>
            <person name="Richardson P."/>
        </authorList>
    </citation>
    <scope>NUCLEOTIDE SEQUENCE [LARGE SCALE GENOMIC DNA]</scope>
    <source>
        <strain>MC0-3</strain>
    </source>
</reference>
<organism>
    <name type="scientific">Burkholderia orbicola (strain MC0-3)</name>
    <dbReference type="NCBI Taxonomy" id="406425"/>
    <lineage>
        <taxon>Bacteria</taxon>
        <taxon>Pseudomonadati</taxon>
        <taxon>Pseudomonadota</taxon>
        <taxon>Betaproteobacteria</taxon>
        <taxon>Burkholderiales</taxon>
        <taxon>Burkholderiaceae</taxon>
        <taxon>Burkholderia</taxon>
        <taxon>Burkholderia cepacia complex</taxon>
        <taxon>Burkholderia orbicola</taxon>
    </lineage>
</organism>
<sequence>MKIAIAGASGRMGRMLIEAVLNDADAQLVGALDRAGSPFLGQDAGAFLGKDTGVKLTDDLDAVFAQAEYLIDFTRPEGTMAHVEAALRHDVKLVIGTTGFTAEQKADLQAAAARIGIVFAANMSVGVNVTLKLLEFAAKHFSHGYDIEIIEAHHRHKVDAPSGTALMMGEAVAGALGRSLDDCAVYGRHGVTGERDPSSIGFAAVRGGDIVGDHTVLFAGIGERIEITHKSSSRVSYAQGALRAVRFLSARGAGLFDMQDVLGLR</sequence>
<proteinExistence type="inferred from homology"/>
<accession>B1JVG6</accession>
<evidence type="ECO:0000255" key="1">
    <source>
        <dbReference type="HAMAP-Rule" id="MF_00102"/>
    </source>
</evidence>
<evidence type="ECO:0000305" key="2"/>
<gene>
    <name evidence="1" type="primary">dapB</name>
    <name type="ordered locus">Bcenmc03_0618</name>
</gene>
<dbReference type="EC" id="1.17.1.8" evidence="1"/>
<dbReference type="EMBL" id="CP000958">
    <property type="protein sequence ID" value="ACA89796.1"/>
    <property type="molecule type" value="Genomic_DNA"/>
</dbReference>
<dbReference type="RefSeq" id="WP_006476927.1">
    <property type="nucleotide sequence ID" value="NC_010508.1"/>
</dbReference>
<dbReference type="SMR" id="B1JVG6"/>
<dbReference type="GeneID" id="83047418"/>
<dbReference type="KEGG" id="bcm:Bcenmc03_0618"/>
<dbReference type="HOGENOM" id="CLU_047479_2_1_4"/>
<dbReference type="UniPathway" id="UPA00034">
    <property type="reaction ID" value="UER00018"/>
</dbReference>
<dbReference type="Proteomes" id="UP000002169">
    <property type="component" value="Chromosome 1"/>
</dbReference>
<dbReference type="GO" id="GO:0005829">
    <property type="term" value="C:cytosol"/>
    <property type="evidence" value="ECO:0007669"/>
    <property type="project" value="TreeGrafter"/>
</dbReference>
<dbReference type="GO" id="GO:0008839">
    <property type="term" value="F:4-hydroxy-tetrahydrodipicolinate reductase"/>
    <property type="evidence" value="ECO:0007669"/>
    <property type="project" value="UniProtKB-EC"/>
</dbReference>
<dbReference type="GO" id="GO:0051287">
    <property type="term" value="F:NAD binding"/>
    <property type="evidence" value="ECO:0007669"/>
    <property type="project" value="UniProtKB-UniRule"/>
</dbReference>
<dbReference type="GO" id="GO:0050661">
    <property type="term" value="F:NADP binding"/>
    <property type="evidence" value="ECO:0007669"/>
    <property type="project" value="UniProtKB-UniRule"/>
</dbReference>
<dbReference type="GO" id="GO:0016726">
    <property type="term" value="F:oxidoreductase activity, acting on CH or CH2 groups, NAD or NADP as acceptor"/>
    <property type="evidence" value="ECO:0007669"/>
    <property type="project" value="UniProtKB-UniRule"/>
</dbReference>
<dbReference type="GO" id="GO:0019877">
    <property type="term" value="P:diaminopimelate biosynthetic process"/>
    <property type="evidence" value="ECO:0007669"/>
    <property type="project" value="UniProtKB-UniRule"/>
</dbReference>
<dbReference type="GO" id="GO:0009089">
    <property type="term" value="P:lysine biosynthetic process via diaminopimelate"/>
    <property type="evidence" value="ECO:0007669"/>
    <property type="project" value="UniProtKB-UniRule"/>
</dbReference>
<dbReference type="CDD" id="cd02274">
    <property type="entry name" value="DHDPR_N"/>
    <property type="match status" value="1"/>
</dbReference>
<dbReference type="FunFam" id="3.30.360.10:FF:000004">
    <property type="entry name" value="4-hydroxy-tetrahydrodipicolinate reductase"/>
    <property type="match status" value="1"/>
</dbReference>
<dbReference type="FunFam" id="3.40.50.720:FF:000048">
    <property type="entry name" value="4-hydroxy-tetrahydrodipicolinate reductase"/>
    <property type="match status" value="1"/>
</dbReference>
<dbReference type="Gene3D" id="3.30.360.10">
    <property type="entry name" value="Dihydrodipicolinate Reductase, domain 2"/>
    <property type="match status" value="1"/>
</dbReference>
<dbReference type="Gene3D" id="3.40.50.720">
    <property type="entry name" value="NAD(P)-binding Rossmann-like Domain"/>
    <property type="match status" value="1"/>
</dbReference>
<dbReference type="HAMAP" id="MF_00102">
    <property type="entry name" value="DapB"/>
    <property type="match status" value="1"/>
</dbReference>
<dbReference type="InterPro" id="IPR022663">
    <property type="entry name" value="DapB_C"/>
</dbReference>
<dbReference type="InterPro" id="IPR000846">
    <property type="entry name" value="DapB_N"/>
</dbReference>
<dbReference type="InterPro" id="IPR022664">
    <property type="entry name" value="DapB_N_CS"/>
</dbReference>
<dbReference type="InterPro" id="IPR023940">
    <property type="entry name" value="DHDPR_bac"/>
</dbReference>
<dbReference type="InterPro" id="IPR036291">
    <property type="entry name" value="NAD(P)-bd_dom_sf"/>
</dbReference>
<dbReference type="NCBIfam" id="TIGR00036">
    <property type="entry name" value="dapB"/>
    <property type="match status" value="1"/>
</dbReference>
<dbReference type="PANTHER" id="PTHR20836:SF0">
    <property type="entry name" value="4-HYDROXY-TETRAHYDRODIPICOLINATE REDUCTASE 1, CHLOROPLASTIC-RELATED"/>
    <property type="match status" value="1"/>
</dbReference>
<dbReference type="PANTHER" id="PTHR20836">
    <property type="entry name" value="DIHYDRODIPICOLINATE REDUCTASE"/>
    <property type="match status" value="1"/>
</dbReference>
<dbReference type="Pfam" id="PF05173">
    <property type="entry name" value="DapB_C"/>
    <property type="match status" value="1"/>
</dbReference>
<dbReference type="Pfam" id="PF01113">
    <property type="entry name" value="DapB_N"/>
    <property type="match status" value="1"/>
</dbReference>
<dbReference type="PIRSF" id="PIRSF000161">
    <property type="entry name" value="DHPR"/>
    <property type="match status" value="1"/>
</dbReference>
<dbReference type="SUPFAM" id="SSF55347">
    <property type="entry name" value="Glyceraldehyde-3-phosphate dehydrogenase-like, C-terminal domain"/>
    <property type="match status" value="1"/>
</dbReference>
<dbReference type="SUPFAM" id="SSF51735">
    <property type="entry name" value="NAD(P)-binding Rossmann-fold domains"/>
    <property type="match status" value="1"/>
</dbReference>
<dbReference type="PROSITE" id="PS01298">
    <property type="entry name" value="DAPB"/>
    <property type="match status" value="1"/>
</dbReference>